<gene>
    <name evidence="1" type="primary">lolB</name>
    <name type="ordered locus">XOO3407</name>
</gene>
<keyword id="KW-0998">Cell outer membrane</keyword>
<keyword id="KW-0143">Chaperone</keyword>
<keyword id="KW-0449">Lipoprotein</keyword>
<keyword id="KW-0472">Membrane</keyword>
<keyword id="KW-0564">Palmitate</keyword>
<keyword id="KW-0653">Protein transport</keyword>
<keyword id="KW-0732">Signal</keyword>
<keyword id="KW-0813">Transport</keyword>
<feature type="signal peptide" evidence="1">
    <location>
        <begin position="1"/>
        <end position="20"/>
    </location>
</feature>
<feature type="chain" id="PRO_1000021692" description="Outer-membrane lipoprotein LolB">
    <location>
        <begin position="21"/>
        <end position="217"/>
    </location>
</feature>
<feature type="lipid moiety-binding region" description="N-palmitoyl cysteine" evidence="1">
    <location>
        <position position="21"/>
    </location>
</feature>
<feature type="lipid moiety-binding region" description="S-diacylglycerol cysteine" evidence="1">
    <location>
        <position position="21"/>
    </location>
</feature>
<dbReference type="EMBL" id="AP008229">
    <property type="protein sequence ID" value="BAE70162.1"/>
    <property type="molecule type" value="Genomic_DNA"/>
</dbReference>
<dbReference type="RefSeq" id="WP_011260046.1">
    <property type="nucleotide sequence ID" value="NC_007705.1"/>
</dbReference>
<dbReference type="SMR" id="Q2NZW5"/>
<dbReference type="KEGG" id="xom:XOO3407"/>
<dbReference type="HOGENOM" id="CLU_092816_2_1_6"/>
<dbReference type="GO" id="GO:0009279">
    <property type="term" value="C:cell outer membrane"/>
    <property type="evidence" value="ECO:0007669"/>
    <property type="project" value="UniProtKB-SubCell"/>
</dbReference>
<dbReference type="GO" id="GO:0044874">
    <property type="term" value="P:lipoprotein localization to outer membrane"/>
    <property type="evidence" value="ECO:0007669"/>
    <property type="project" value="UniProtKB-UniRule"/>
</dbReference>
<dbReference type="GO" id="GO:0015031">
    <property type="term" value="P:protein transport"/>
    <property type="evidence" value="ECO:0007669"/>
    <property type="project" value="UniProtKB-KW"/>
</dbReference>
<dbReference type="CDD" id="cd16326">
    <property type="entry name" value="LolB"/>
    <property type="match status" value="1"/>
</dbReference>
<dbReference type="Gene3D" id="2.50.20.10">
    <property type="entry name" value="Lipoprotein localisation LolA/LolB/LppX"/>
    <property type="match status" value="1"/>
</dbReference>
<dbReference type="HAMAP" id="MF_00233">
    <property type="entry name" value="LolB"/>
    <property type="match status" value="1"/>
</dbReference>
<dbReference type="InterPro" id="IPR029046">
    <property type="entry name" value="LolA/LolB/LppX"/>
</dbReference>
<dbReference type="InterPro" id="IPR004565">
    <property type="entry name" value="OM_lipoprot_LolB"/>
</dbReference>
<dbReference type="NCBIfam" id="TIGR00548">
    <property type="entry name" value="lolB"/>
    <property type="match status" value="1"/>
</dbReference>
<dbReference type="Pfam" id="PF03550">
    <property type="entry name" value="LolB"/>
    <property type="match status" value="1"/>
</dbReference>
<dbReference type="SUPFAM" id="SSF89392">
    <property type="entry name" value="Prokaryotic lipoproteins and lipoprotein localization factors"/>
    <property type="match status" value="1"/>
</dbReference>
<dbReference type="PROSITE" id="PS51257">
    <property type="entry name" value="PROKAR_LIPOPROTEIN"/>
    <property type="match status" value="1"/>
</dbReference>
<name>LOLB_XANOM</name>
<organism>
    <name type="scientific">Xanthomonas oryzae pv. oryzae (strain MAFF 311018)</name>
    <dbReference type="NCBI Taxonomy" id="342109"/>
    <lineage>
        <taxon>Bacteria</taxon>
        <taxon>Pseudomonadati</taxon>
        <taxon>Pseudomonadota</taxon>
        <taxon>Gammaproteobacteria</taxon>
        <taxon>Lysobacterales</taxon>
        <taxon>Lysobacteraceae</taxon>
        <taxon>Xanthomonas</taxon>
    </lineage>
</organism>
<accession>Q2NZW5</accession>
<evidence type="ECO:0000255" key="1">
    <source>
        <dbReference type="HAMAP-Rule" id="MF_00233"/>
    </source>
</evidence>
<comment type="function">
    <text evidence="1">Plays a critical role in the incorporation of lipoproteins in the outer membrane after they are released by the LolA protein.</text>
</comment>
<comment type="subunit">
    <text evidence="1">Monomer.</text>
</comment>
<comment type="subcellular location">
    <subcellularLocation>
        <location evidence="1">Cell outer membrane</location>
        <topology evidence="1">Lipid-anchor</topology>
    </subcellularLocation>
</comment>
<comment type="similarity">
    <text evidence="1">Belongs to the LolB family.</text>
</comment>
<protein>
    <recommendedName>
        <fullName evidence="1">Outer-membrane lipoprotein LolB</fullName>
    </recommendedName>
</protein>
<reference key="1">
    <citation type="journal article" date="2005" name="Jpn. Agric. Res. Q.">
        <title>Genome sequence of Xanthomonas oryzae pv. oryzae suggests contribution of large numbers of effector genes and insertion sequences to its race diversity.</title>
        <authorList>
            <person name="Ochiai H."/>
            <person name="Inoue Y."/>
            <person name="Takeya M."/>
            <person name="Sasaki A."/>
            <person name="Kaku H."/>
        </authorList>
    </citation>
    <scope>NUCLEOTIDE SEQUENCE [LARGE SCALE GENOMIC DNA]</scope>
    <source>
        <strain>MAFF 311018</strain>
    </source>
</reference>
<sequence length="217" mass="23406">MSKALRTLALSGLVLVGLSACVSVPRGQGSGAAVVEQISDSARQGEAARQAWLQQHPNWSFQGRVAISKDRNGGSGRIDWQQDGPRYRVQLSAPVTRQSWVLTGDTTTGAGRLEGLDGGPRSGSDAEKVLLEATGWTIPVNQMPDWVRALRIADAGAARVELDAAGRPRTVQQDGWTIDFLAWTPASADQPELPQRIEARYGEAKVRLLVDQWTVSP</sequence>
<proteinExistence type="inferred from homology"/>